<evidence type="ECO:0000250" key="1"/>
<evidence type="ECO:0000255" key="2">
    <source>
        <dbReference type="HAMAP-Rule" id="MF_00118"/>
    </source>
</evidence>
<accession>Q2K9L8</accession>
<proteinExistence type="inferred from homology"/>
<reference key="1">
    <citation type="journal article" date="2006" name="Proc. Natl. Acad. Sci. U.S.A.">
        <title>The partitioned Rhizobium etli genome: genetic and metabolic redundancy in seven interacting replicons.</title>
        <authorList>
            <person name="Gonzalez V."/>
            <person name="Santamaria R.I."/>
            <person name="Bustos P."/>
            <person name="Hernandez-Gonzalez I."/>
            <person name="Medrano-Soto A."/>
            <person name="Moreno-Hagelsieb G."/>
            <person name="Janga S.C."/>
            <person name="Ramirez M.A."/>
            <person name="Jimenez-Jacinto V."/>
            <person name="Collado-Vides J."/>
            <person name="Davila G."/>
        </authorList>
    </citation>
    <scope>NUCLEOTIDE SEQUENCE [LARGE SCALE GENOMIC DNA]</scope>
    <source>
        <strain>ATCC 51251 / DSM 11541 / JCM 21823 / NBRC 15573 / CFN 42</strain>
    </source>
</reference>
<sequence>MAKSKFERNKPHVNIGTIGHVDHGKTSLTAAITKYFGEFKAYDQIDAAPEEKARGITISTAHVEYETPARHYAHVDCPGHADYVKNMITGAAQMDGAILVCSAADGPMPQTREHILLARQVGVPAIVVFLNKVDQVDDAELLELVELEVRELLSSYDFPGDDIPVVKGSALAALEDSDKKIGEDAIRELMAAVDSYIPTPERPVDQPFLMPIEDVFSISGRGTVVTGRVERGIIKVGEEVEIVGIRPTSKTTVTGVEMFRKLLDQGQAGDNIGALIRGVNRDGVERGQILCKPGSVKPHKKFKAEAYILTKEEGGRHTPFFTNYRPQFYFRTTDVTGIVTLPEGTEMVMPGDNVTVDVELIVPIAMEEKLRFAIREGGRTVGAGIVAIESLE</sequence>
<comment type="function">
    <text evidence="2">GTP hydrolase that promotes the GTP-dependent binding of aminoacyl-tRNA to the A-site of ribosomes during protein biosynthesis.</text>
</comment>
<comment type="catalytic activity">
    <reaction evidence="2">
        <text>GTP + H2O = GDP + phosphate + H(+)</text>
        <dbReference type="Rhea" id="RHEA:19669"/>
        <dbReference type="ChEBI" id="CHEBI:15377"/>
        <dbReference type="ChEBI" id="CHEBI:15378"/>
        <dbReference type="ChEBI" id="CHEBI:37565"/>
        <dbReference type="ChEBI" id="CHEBI:43474"/>
        <dbReference type="ChEBI" id="CHEBI:58189"/>
        <dbReference type="EC" id="3.6.5.3"/>
    </reaction>
    <physiologicalReaction direction="left-to-right" evidence="2">
        <dbReference type="Rhea" id="RHEA:19670"/>
    </physiologicalReaction>
</comment>
<comment type="subunit">
    <text evidence="2">Monomer.</text>
</comment>
<comment type="subcellular location">
    <subcellularLocation>
        <location evidence="2">Cytoplasm</location>
    </subcellularLocation>
</comment>
<comment type="similarity">
    <text evidence="2">Belongs to the TRAFAC class translation factor GTPase superfamily. Classic translation factor GTPase family. EF-Tu/EF-1A subfamily.</text>
</comment>
<keyword id="KW-0963">Cytoplasm</keyword>
<keyword id="KW-0251">Elongation factor</keyword>
<keyword id="KW-0342">GTP-binding</keyword>
<keyword id="KW-0378">Hydrolase</keyword>
<keyword id="KW-0460">Magnesium</keyword>
<keyword id="KW-0479">Metal-binding</keyword>
<keyword id="KW-0547">Nucleotide-binding</keyword>
<keyword id="KW-0648">Protein biosynthesis</keyword>
<keyword id="KW-1185">Reference proteome</keyword>
<dbReference type="EC" id="3.6.5.3" evidence="2"/>
<dbReference type="EMBL" id="CP000133">
    <property type="protein sequence ID" value="ABC90468.1"/>
    <property type="molecule type" value="Genomic_DNA"/>
</dbReference>
<dbReference type="RefSeq" id="WP_011424980.1">
    <property type="nucleotide sequence ID" value="NC_007761.1"/>
</dbReference>
<dbReference type="SMR" id="Q2K9L8"/>
<dbReference type="KEGG" id="ret:RHE_CH01673"/>
<dbReference type="eggNOG" id="COG0050">
    <property type="taxonomic scope" value="Bacteria"/>
</dbReference>
<dbReference type="HOGENOM" id="CLU_007265_0_1_5"/>
<dbReference type="OrthoDB" id="9803139at2"/>
<dbReference type="Proteomes" id="UP000001936">
    <property type="component" value="Chromosome"/>
</dbReference>
<dbReference type="GO" id="GO:0005829">
    <property type="term" value="C:cytosol"/>
    <property type="evidence" value="ECO:0007669"/>
    <property type="project" value="TreeGrafter"/>
</dbReference>
<dbReference type="GO" id="GO:0005525">
    <property type="term" value="F:GTP binding"/>
    <property type="evidence" value="ECO:0007669"/>
    <property type="project" value="UniProtKB-UniRule"/>
</dbReference>
<dbReference type="GO" id="GO:0003924">
    <property type="term" value="F:GTPase activity"/>
    <property type="evidence" value="ECO:0007669"/>
    <property type="project" value="InterPro"/>
</dbReference>
<dbReference type="GO" id="GO:0097216">
    <property type="term" value="F:guanosine tetraphosphate binding"/>
    <property type="evidence" value="ECO:0007669"/>
    <property type="project" value="UniProtKB-ARBA"/>
</dbReference>
<dbReference type="GO" id="GO:0003746">
    <property type="term" value="F:translation elongation factor activity"/>
    <property type="evidence" value="ECO:0007669"/>
    <property type="project" value="UniProtKB-UniRule"/>
</dbReference>
<dbReference type="CDD" id="cd01884">
    <property type="entry name" value="EF_Tu"/>
    <property type="match status" value="1"/>
</dbReference>
<dbReference type="CDD" id="cd03697">
    <property type="entry name" value="EFTU_II"/>
    <property type="match status" value="1"/>
</dbReference>
<dbReference type="CDD" id="cd03707">
    <property type="entry name" value="EFTU_III"/>
    <property type="match status" value="1"/>
</dbReference>
<dbReference type="FunFam" id="2.40.30.10:FF:000001">
    <property type="entry name" value="Elongation factor Tu"/>
    <property type="match status" value="1"/>
</dbReference>
<dbReference type="FunFam" id="3.40.50.300:FF:000003">
    <property type="entry name" value="Elongation factor Tu"/>
    <property type="match status" value="1"/>
</dbReference>
<dbReference type="Gene3D" id="3.40.50.300">
    <property type="entry name" value="P-loop containing nucleotide triphosphate hydrolases"/>
    <property type="match status" value="1"/>
</dbReference>
<dbReference type="Gene3D" id="2.40.30.10">
    <property type="entry name" value="Translation factors"/>
    <property type="match status" value="2"/>
</dbReference>
<dbReference type="HAMAP" id="MF_00118_B">
    <property type="entry name" value="EF_Tu_B"/>
    <property type="match status" value="1"/>
</dbReference>
<dbReference type="InterPro" id="IPR041709">
    <property type="entry name" value="EF-Tu_GTP-bd"/>
</dbReference>
<dbReference type="InterPro" id="IPR050055">
    <property type="entry name" value="EF-Tu_GTPase"/>
</dbReference>
<dbReference type="InterPro" id="IPR004161">
    <property type="entry name" value="EFTu-like_2"/>
</dbReference>
<dbReference type="InterPro" id="IPR033720">
    <property type="entry name" value="EFTU_2"/>
</dbReference>
<dbReference type="InterPro" id="IPR031157">
    <property type="entry name" value="G_TR_CS"/>
</dbReference>
<dbReference type="InterPro" id="IPR027417">
    <property type="entry name" value="P-loop_NTPase"/>
</dbReference>
<dbReference type="InterPro" id="IPR005225">
    <property type="entry name" value="Small_GTP-bd"/>
</dbReference>
<dbReference type="InterPro" id="IPR000795">
    <property type="entry name" value="T_Tr_GTP-bd_dom"/>
</dbReference>
<dbReference type="InterPro" id="IPR009000">
    <property type="entry name" value="Transl_B-barrel_sf"/>
</dbReference>
<dbReference type="InterPro" id="IPR009001">
    <property type="entry name" value="Transl_elong_EF1A/Init_IF2_C"/>
</dbReference>
<dbReference type="InterPro" id="IPR004541">
    <property type="entry name" value="Transl_elong_EFTu/EF1A_bac/org"/>
</dbReference>
<dbReference type="InterPro" id="IPR004160">
    <property type="entry name" value="Transl_elong_EFTu/EF1A_C"/>
</dbReference>
<dbReference type="NCBIfam" id="TIGR00485">
    <property type="entry name" value="EF-Tu"/>
    <property type="match status" value="1"/>
</dbReference>
<dbReference type="NCBIfam" id="NF000766">
    <property type="entry name" value="PRK00049.1"/>
    <property type="match status" value="1"/>
</dbReference>
<dbReference type="NCBIfam" id="NF009372">
    <property type="entry name" value="PRK12735.1"/>
    <property type="match status" value="1"/>
</dbReference>
<dbReference type="NCBIfam" id="NF009373">
    <property type="entry name" value="PRK12736.1"/>
    <property type="match status" value="1"/>
</dbReference>
<dbReference type="NCBIfam" id="TIGR00231">
    <property type="entry name" value="small_GTP"/>
    <property type="match status" value="1"/>
</dbReference>
<dbReference type="PANTHER" id="PTHR43721:SF22">
    <property type="entry name" value="ELONGATION FACTOR TU, MITOCHONDRIAL"/>
    <property type="match status" value="1"/>
</dbReference>
<dbReference type="PANTHER" id="PTHR43721">
    <property type="entry name" value="ELONGATION FACTOR TU-RELATED"/>
    <property type="match status" value="1"/>
</dbReference>
<dbReference type="Pfam" id="PF00009">
    <property type="entry name" value="GTP_EFTU"/>
    <property type="match status" value="1"/>
</dbReference>
<dbReference type="Pfam" id="PF03144">
    <property type="entry name" value="GTP_EFTU_D2"/>
    <property type="match status" value="1"/>
</dbReference>
<dbReference type="Pfam" id="PF03143">
    <property type="entry name" value="GTP_EFTU_D3"/>
    <property type="match status" value="1"/>
</dbReference>
<dbReference type="PRINTS" id="PR00315">
    <property type="entry name" value="ELONGATNFCT"/>
</dbReference>
<dbReference type="SUPFAM" id="SSF50465">
    <property type="entry name" value="EF-Tu/eEF-1alpha/eIF2-gamma C-terminal domain"/>
    <property type="match status" value="1"/>
</dbReference>
<dbReference type="SUPFAM" id="SSF52540">
    <property type="entry name" value="P-loop containing nucleoside triphosphate hydrolases"/>
    <property type="match status" value="1"/>
</dbReference>
<dbReference type="SUPFAM" id="SSF50447">
    <property type="entry name" value="Translation proteins"/>
    <property type="match status" value="1"/>
</dbReference>
<dbReference type="PROSITE" id="PS00301">
    <property type="entry name" value="G_TR_1"/>
    <property type="match status" value="1"/>
</dbReference>
<dbReference type="PROSITE" id="PS51722">
    <property type="entry name" value="G_TR_2"/>
    <property type="match status" value="1"/>
</dbReference>
<feature type="chain" id="PRO_0000337487" description="Elongation factor Tu 2">
    <location>
        <begin position="1"/>
        <end position="392"/>
    </location>
</feature>
<feature type="domain" description="tr-type G">
    <location>
        <begin position="10"/>
        <end position="201"/>
    </location>
</feature>
<feature type="region of interest" description="G1" evidence="1">
    <location>
        <begin position="19"/>
        <end position="26"/>
    </location>
</feature>
<feature type="region of interest" description="G2" evidence="1">
    <location>
        <begin position="55"/>
        <end position="59"/>
    </location>
</feature>
<feature type="region of interest" description="G3" evidence="1">
    <location>
        <begin position="76"/>
        <end position="79"/>
    </location>
</feature>
<feature type="region of interest" description="G4" evidence="1">
    <location>
        <begin position="131"/>
        <end position="134"/>
    </location>
</feature>
<feature type="region of interest" description="G5" evidence="1">
    <location>
        <begin position="169"/>
        <end position="171"/>
    </location>
</feature>
<feature type="binding site" evidence="2">
    <location>
        <begin position="19"/>
        <end position="26"/>
    </location>
    <ligand>
        <name>GTP</name>
        <dbReference type="ChEBI" id="CHEBI:37565"/>
    </ligand>
</feature>
<feature type="binding site" evidence="2">
    <location>
        <position position="26"/>
    </location>
    <ligand>
        <name>Mg(2+)</name>
        <dbReference type="ChEBI" id="CHEBI:18420"/>
    </ligand>
</feature>
<feature type="binding site" evidence="2">
    <location>
        <begin position="76"/>
        <end position="80"/>
    </location>
    <ligand>
        <name>GTP</name>
        <dbReference type="ChEBI" id="CHEBI:37565"/>
    </ligand>
</feature>
<feature type="binding site" evidence="2">
    <location>
        <begin position="131"/>
        <end position="134"/>
    </location>
    <ligand>
        <name>GTP</name>
        <dbReference type="ChEBI" id="CHEBI:37565"/>
    </ligand>
</feature>
<organism>
    <name type="scientific">Rhizobium etli (strain ATCC 51251 / DSM 11541 / JCM 21823 / NBRC 15573 / CFN 42)</name>
    <dbReference type="NCBI Taxonomy" id="347834"/>
    <lineage>
        <taxon>Bacteria</taxon>
        <taxon>Pseudomonadati</taxon>
        <taxon>Pseudomonadota</taxon>
        <taxon>Alphaproteobacteria</taxon>
        <taxon>Hyphomicrobiales</taxon>
        <taxon>Rhizobiaceae</taxon>
        <taxon>Rhizobium/Agrobacterium group</taxon>
        <taxon>Rhizobium</taxon>
    </lineage>
</organism>
<protein>
    <recommendedName>
        <fullName evidence="2">Elongation factor Tu 2</fullName>
        <shortName evidence="2">EF-Tu 2</shortName>
        <ecNumber evidence="2">3.6.5.3</ecNumber>
    </recommendedName>
</protein>
<name>EFTU2_RHIEC</name>
<gene>
    <name evidence="2" type="primary">tuf2</name>
    <name type="synonym">tufA</name>
    <name type="ordered locus">RHE_CH01673</name>
</gene>